<feature type="chain" id="PRO_0000141233" description="Ribose-phosphate pyrophosphokinase">
    <location>
        <begin position="1"/>
        <end position="309"/>
    </location>
</feature>
<feature type="active site" evidence="1">
    <location>
        <position position="199"/>
    </location>
</feature>
<feature type="binding site" evidence="1">
    <location>
        <begin position="42"/>
        <end position="44"/>
    </location>
    <ligand>
        <name>ATP</name>
        <dbReference type="ChEBI" id="CHEBI:30616"/>
    </ligand>
</feature>
<feature type="binding site" evidence="1">
    <location>
        <begin position="102"/>
        <end position="103"/>
    </location>
    <ligand>
        <name>ATP</name>
        <dbReference type="ChEBI" id="CHEBI:30616"/>
    </ligand>
</feature>
<feature type="binding site" evidence="1">
    <location>
        <position position="136"/>
    </location>
    <ligand>
        <name>Mg(2+)</name>
        <dbReference type="ChEBI" id="CHEBI:18420"/>
        <label>1</label>
    </ligand>
</feature>
<feature type="binding site" evidence="1">
    <location>
        <position position="175"/>
    </location>
    <ligand>
        <name>Mg(2+)</name>
        <dbReference type="ChEBI" id="CHEBI:18420"/>
        <label>2</label>
    </ligand>
</feature>
<feature type="binding site" evidence="1">
    <location>
        <position position="201"/>
    </location>
    <ligand>
        <name>D-ribose 5-phosphate</name>
        <dbReference type="ChEBI" id="CHEBI:78346"/>
    </ligand>
</feature>
<feature type="binding site" evidence="1">
    <location>
        <position position="226"/>
    </location>
    <ligand>
        <name>D-ribose 5-phosphate</name>
        <dbReference type="ChEBI" id="CHEBI:78346"/>
    </ligand>
</feature>
<feature type="binding site" evidence="1">
    <location>
        <begin position="230"/>
        <end position="234"/>
    </location>
    <ligand>
        <name>D-ribose 5-phosphate</name>
        <dbReference type="ChEBI" id="CHEBI:78346"/>
    </ligand>
</feature>
<comment type="function">
    <text evidence="1">Involved in the biosynthesis of the central metabolite phospho-alpha-D-ribosyl-1-pyrophosphate (PRPP) via the transfer of pyrophosphoryl group from ATP to 1-hydroxyl of ribose-5-phosphate (Rib-5-P).</text>
</comment>
<comment type="catalytic activity">
    <reaction evidence="1">
        <text>D-ribose 5-phosphate + ATP = 5-phospho-alpha-D-ribose 1-diphosphate + AMP + H(+)</text>
        <dbReference type="Rhea" id="RHEA:15609"/>
        <dbReference type="ChEBI" id="CHEBI:15378"/>
        <dbReference type="ChEBI" id="CHEBI:30616"/>
        <dbReference type="ChEBI" id="CHEBI:58017"/>
        <dbReference type="ChEBI" id="CHEBI:78346"/>
        <dbReference type="ChEBI" id="CHEBI:456215"/>
        <dbReference type="EC" id="2.7.6.1"/>
    </reaction>
</comment>
<comment type="cofactor">
    <cofactor evidence="1">
        <name>Mg(2+)</name>
        <dbReference type="ChEBI" id="CHEBI:18420"/>
    </cofactor>
    <text evidence="1">Binds 2 Mg(2+) ions per subunit.</text>
</comment>
<comment type="pathway">
    <text evidence="1">Metabolic intermediate biosynthesis; 5-phospho-alpha-D-ribose 1-diphosphate biosynthesis; 5-phospho-alpha-D-ribose 1-diphosphate from D-ribose 5-phosphate (route I): step 1/1.</text>
</comment>
<comment type="subcellular location">
    <subcellularLocation>
        <location evidence="1">Cytoplasm</location>
    </subcellularLocation>
</comment>
<comment type="similarity">
    <text evidence="1">Belongs to the ribose-phosphate pyrophosphokinase family. Class III (archaeal) subfamily.</text>
</comment>
<evidence type="ECO:0000255" key="1">
    <source>
        <dbReference type="HAMAP-Rule" id="MF_00583"/>
    </source>
</evidence>
<accession>Q9YAW0</accession>
<name>KPRS_AERPE</name>
<protein>
    <recommendedName>
        <fullName evidence="1">Ribose-phosphate pyrophosphokinase</fullName>
        <shortName evidence="1">RPPK</shortName>
        <ecNumber evidence="1">2.7.6.1</ecNumber>
    </recommendedName>
    <alternativeName>
        <fullName evidence="1">5-phospho-D-ribosyl alpha-1-diphosphate synthase</fullName>
    </alternativeName>
    <alternativeName>
        <fullName evidence="1">Phosphoribosyl diphosphate synthase</fullName>
    </alternativeName>
    <alternativeName>
        <fullName evidence="1">Phosphoribosyl pyrophosphate synthase</fullName>
        <shortName evidence="1">P-Rib-PP synthase</shortName>
        <shortName evidence="1">PRPP synthase</shortName>
        <shortName evidence="1">PRPPase</shortName>
    </alternativeName>
</protein>
<reference key="1">
    <citation type="journal article" date="1999" name="DNA Res.">
        <title>Complete genome sequence of an aerobic hyper-thermophilic crenarchaeon, Aeropyrum pernix K1.</title>
        <authorList>
            <person name="Kawarabayasi Y."/>
            <person name="Hino Y."/>
            <person name="Horikawa H."/>
            <person name="Yamazaki S."/>
            <person name="Haikawa Y."/>
            <person name="Jin-no K."/>
            <person name="Takahashi M."/>
            <person name="Sekine M."/>
            <person name="Baba S."/>
            <person name="Ankai A."/>
            <person name="Kosugi H."/>
            <person name="Hosoyama A."/>
            <person name="Fukui S."/>
            <person name="Nagai Y."/>
            <person name="Nishijima K."/>
            <person name="Nakazawa H."/>
            <person name="Takamiya M."/>
            <person name="Masuda S."/>
            <person name="Funahashi T."/>
            <person name="Tanaka T."/>
            <person name="Kudoh Y."/>
            <person name="Yamazaki J."/>
            <person name="Kushida N."/>
            <person name="Oguchi A."/>
            <person name="Aoki K."/>
            <person name="Kubota K."/>
            <person name="Nakamura Y."/>
            <person name="Nomura N."/>
            <person name="Sako Y."/>
            <person name="Kikuchi H."/>
        </authorList>
    </citation>
    <scope>NUCLEOTIDE SEQUENCE [LARGE SCALE GENOMIC DNA]</scope>
    <source>
        <strain>ATCC 700893 / DSM 11879 / JCM 9820 / NBRC 100138 / K1</strain>
    </source>
</reference>
<gene>
    <name evidence="1" type="primary">prs</name>
    <name type="ordered locus">APE_1834.1</name>
</gene>
<keyword id="KW-0067">ATP-binding</keyword>
<keyword id="KW-0963">Cytoplasm</keyword>
<keyword id="KW-0418">Kinase</keyword>
<keyword id="KW-0460">Magnesium</keyword>
<keyword id="KW-0479">Metal-binding</keyword>
<keyword id="KW-0545">Nucleotide biosynthesis</keyword>
<keyword id="KW-0547">Nucleotide-binding</keyword>
<keyword id="KW-1185">Reference proteome</keyword>
<keyword id="KW-0808">Transferase</keyword>
<dbReference type="EC" id="2.7.6.1" evidence="1"/>
<dbReference type="EMBL" id="BA000002">
    <property type="protein sequence ID" value="BAA80838.2"/>
    <property type="molecule type" value="Genomic_DNA"/>
</dbReference>
<dbReference type="PIR" id="A72569">
    <property type="entry name" value="A72569"/>
</dbReference>
<dbReference type="RefSeq" id="WP_010866625.1">
    <property type="nucleotide sequence ID" value="NC_000854.2"/>
</dbReference>
<dbReference type="SMR" id="Q9YAW0"/>
<dbReference type="STRING" id="272557.APE_1834.1"/>
<dbReference type="EnsemblBacteria" id="BAA80838">
    <property type="protein sequence ID" value="BAA80838"/>
    <property type="gene ID" value="APE_1834.1"/>
</dbReference>
<dbReference type="GeneID" id="1446274"/>
<dbReference type="KEGG" id="ape:APE_1834.1"/>
<dbReference type="PATRIC" id="fig|272557.25.peg.1231"/>
<dbReference type="eggNOG" id="arCOG00067">
    <property type="taxonomic scope" value="Archaea"/>
</dbReference>
<dbReference type="UniPathway" id="UPA00087">
    <property type="reaction ID" value="UER00172"/>
</dbReference>
<dbReference type="Proteomes" id="UP000002518">
    <property type="component" value="Chromosome"/>
</dbReference>
<dbReference type="GO" id="GO:0005737">
    <property type="term" value="C:cytoplasm"/>
    <property type="evidence" value="ECO:0007669"/>
    <property type="project" value="UniProtKB-SubCell"/>
</dbReference>
<dbReference type="GO" id="GO:0002189">
    <property type="term" value="C:ribose phosphate diphosphokinase complex"/>
    <property type="evidence" value="ECO:0007669"/>
    <property type="project" value="TreeGrafter"/>
</dbReference>
<dbReference type="GO" id="GO:0005524">
    <property type="term" value="F:ATP binding"/>
    <property type="evidence" value="ECO:0007669"/>
    <property type="project" value="UniProtKB-KW"/>
</dbReference>
<dbReference type="GO" id="GO:0016301">
    <property type="term" value="F:kinase activity"/>
    <property type="evidence" value="ECO:0007669"/>
    <property type="project" value="UniProtKB-KW"/>
</dbReference>
<dbReference type="GO" id="GO:0000287">
    <property type="term" value="F:magnesium ion binding"/>
    <property type="evidence" value="ECO:0007669"/>
    <property type="project" value="UniProtKB-UniRule"/>
</dbReference>
<dbReference type="GO" id="GO:0004749">
    <property type="term" value="F:ribose phosphate diphosphokinase activity"/>
    <property type="evidence" value="ECO:0007669"/>
    <property type="project" value="UniProtKB-UniRule"/>
</dbReference>
<dbReference type="GO" id="GO:0006015">
    <property type="term" value="P:5-phosphoribose 1-diphosphate biosynthetic process"/>
    <property type="evidence" value="ECO:0007669"/>
    <property type="project" value="UniProtKB-UniRule"/>
</dbReference>
<dbReference type="GO" id="GO:0006164">
    <property type="term" value="P:purine nucleotide biosynthetic process"/>
    <property type="evidence" value="ECO:0007669"/>
    <property type="project" value="TreeGrafter"/>
</dbReference>
<dbReference type="CDD" id="cd06223">
    <property type="entry name" value="PRTases_typeI"/>
    <property type="match status" value="1"/>
</dbReference>
<dbReference type="Gene3D" id="3.40.50.2020">
    <property type="match status" value="2"/>
</dbReference>
<dbReference type="HAMAP" id="MF_00583_A">
    <property type="entry name" value="RibP_PPkinase_A"/>
    <property type="match status" value="1"/>
</dbReference>
<dbReference type="InterPro" id="IPR029099">
    <property type="entry name" value="Pribosyltran_N"/>
</dbReference>
<dbReference type="InterPro" id="IPR000836">
    <property type="entry name" value="PRibTrfase_dom"/>
</dbReference>
<dbReference type="InterPro" id="IPR029057">
    <property type="entry name" value="PRTase-like"/>
</dbReference>
<dbReference type="InterPro" id="IPR005946">
    <property type="entry name" value="Rib-P_diPkinase"/>
</dbReference>
<dbReference type="InterPro" id="IPR037514">
    <property type="entry name" value="Rib-P_diPkinase_arc"/>
</dbReference>
<dbReference type="NCBIfam" id="TIGR01251">
    <property type="entry name" value="ribP_PPkin"/>
    <property type="match status" value="1"/>
</dbReference>
<dbReference type="PANTHER" id="PTHR10210">
    <property type="entry name" value="RIBOSE-PHOSPHATE DIPHOSPHOKINASE FAMILY MEMBER"/>
    <property type="match status" value="1"/>
</dbReference>
<dbReference type="PANTHER" id="PTHR10210:SF32">
    <property type="entry name" value="RIBOSE-PHOSPHATE PYROPHOSPHOKINASE 2"/>
    <property type="match status" value="1"/>
</dbReference>
<dbReference type="Pfam" id="PF00156">
    <property type="entry name" value="Pribosyltran"/>
    <property type="match status" value="1"/>
</dbReference>
<dbReference type="Pfam" id="PF13793">
    <property type="entry name" value="Pribosyltran_N"/>
    <property type="match status" value="1"/>
</dbReference>
<dbReference type="SMART" id="SM01400">
    <property type="entry name" value="Pribosyltran_N"/>
    <property type="match status" value="1"/>
</dbReference>
<dbReference type="SUPFAM" id="SSF53271">
    <property type="entry name" value="PRTase-like"/>
    <property type="match status" value="1"/>
</dbReference>
<organism>
    <name type="scientific">Aeropyrum pernix (strain ATCC 700893 / DSM 11879 / JCM 9820 / NBRC 100138 / K1)</name>
    <dbReference type="NCBI Taxonomy" id="272557"/>
    <lineage>
        <taxon>Archaea</taxon>
        <taxon>Thermoproteota</taxon>
        <taxon>Thermoprotei</taxon>
        <taxon>Desulfurococcales</taxon>
        <taxon>Desulfurococcaceae</taxon>
        <taxon>Aeropyrum</taxon>
    </lineage>
</organism>
<proteinExistence type="inferred from homology"/>
<sequence>MEGPEQWVIVGGWGSASAEFSEGLSRNMGLKLVKPVFKLFPDEEEYVRIEGDISGFTGAIVVQSFERPASRSLVYSLLIADALKEAGVGRIVLMAPYMGYTRQDRVFLPGEPVSVRAVMRALASSGYNALASIEVHKEYVLDYFDGSTLNIFPFTYMLKETGISCGDNTIIVAPDKGSLPRVERLARETGCRSYGYLVKERDRITGEVRLAKSTVDPRGKNAIVVDDIISTGGTIALASQWLLENGANSVFVLAAHYLGIGNAEEKMMKAGVSRVVTGNTLPRKPSKIVTYVDLTGLAAGQLTKLVSNL</sequence>